<accession>B5QWZ7</accession>
<gene>
    <name evidence="1" type="primary">cdh</name>
    <name type="ordered locus">SEN3854</name>
</gene>
<keyword id="KW-0997">Cell inner membrane</keyword>
<keyword id="KW-1003">Cell membrane</keyword>
<keyword id="KW-0378">Hydrolase</keyword>
<keyword id="KW-0444">Lipid biosynthesis</keyword>
<keyword id="KW-0443">Lipid metabolism</keyword>
<keyword id="KW-0472">Membrane</keyword>
<keyword id="KW-0594">Phospholipid biosynthesis</keyword>
<keyword id="KW-1208">Phospholipid metabolism</keyword>
<keyword id="KW-0812">Transmembrane</keyword>
<keyword id="KW-1133">Transmembrane helix</keyword>
<protein>
    <recommendedName>
        <fullName evidence="1">CDP-diacylglycerol pyrophosphatase</fullName>
        <ecNumber evidence="1">3.6.1.26</ecNumber>
    </recommendedName>
    <alternativeName>
        <fullName evidence="1">CDP-diacylglycerol phosphatidylhydrolase</fullName>
    </alternativeName>
    <alternativeName>
        <fullName evidence="1">CDP-diglyceride hydrolase</fullName>
    </alternativeName>
</protein>
<name>CDH_SALEP</name>
<evidence type="ECO:0000255" key="1">
    <source>
        <dbReference type="HAMAP-Rule" id="MF_00319"/>
    </source>
</evidence>
<reference key="1">
    <citation type="journal article" date="2008" name="Genome Res.">
        <title>Comparative genome analysis of Salmonella enteritidis PT4 and Salmonella gallinarum 287/91 provides insights into evolutionary and host adaptation pathways.</title>
        <authorList>
            <person name="Thomson N.R."/>
            <person name="Clayton D.J."/>
            <person name="Windhorst D."/>
            <person name="Vernikos G."/>
            <person name="Davidson S."/>
            <person name="Churcher C."/>
            <person name="Quail M.A."/>
            <person name="Stevens M."/>
            <person name="Jones M.A."/>
            <person name="Watson M."/>
            <person name="Barron A."/>
            <person name="Layton A."/>
            <person name="Pickard D."/>
            <person name="Kingsley R.A."/>
            <person name="Bignell A."/>
            <person name="Clark L."/>
            <person name="Harris B."/>
            <person name="Ormond D."/>
            <person name="Abdellah Z."/>
            <person name="Brooks K."/>
            <person name="Cherevach I."/>
            <person name="Chillingworth T."/>
            <person name="Woodward J."/>
            <person name="Norberczak H."/>
            <person name="Lord A."/>
            <person name="Arrowsmith C."/>
            <person name="Jagels K."/>
            <person name="Moule S."/>
            <person name="Mungall K."/>
            <person name="Saunders M."/>
            <person name="Whitehead S."/>
            <person name="Chabalgoity J.A."/>
            <person name="Maskell D."/>
            <person name="Humphreys T."/>
            <person name="Roberts M."/>
            <person name="Barrow P.A."/>
            <person name="Dougan G."/>
            <person name="Parkhill J."/>
        </authorList>
    </citation>
    <scope>NUCLEOTIDE SEQUENCE [LARGE SCALE GENOMIC DNA]</scope>
    <source>
        <strain>P125109</strain>
    </source>
</reference>
<proteinExistence type="inferred from homology"/>
<comment type="catalytic activity">
    <reaction evidence="1">
        <text>a CDP-1,2-diacyl-sn-glycerol + H2O = a 1,2-diacyl-sn-glycero-3-phosphate + CMP + 2 H(+)</text>
        <dbReference type="Rhea" id="RHEA:15221"/>
        <dbReference type="ChEBI" id="CHEBI:15377"/>
        <dbReference type="ChEBI" id="CHEBI:15378"/>
        <dbReference type="ChEBI" id="CHEBI:58332"/>
        <dbReference type="ChEBI" id="CHEBI:58608"/>
        <dbReference type="ChEBI" id="CHEBI:60377"/>
        <dbReference type="EC" id="3.6.1.26"/>
    </reaction>
</comment>
<comment type="pathway">
    <text evidence="1">Phospholipid metabolism; CDP-diacylglycerol degradation; phosphatidate from CDP-diacylglycerol: step 1/1.</text>
</comment>
<comment type="subcellular location">
    <subcellularLocation>
        <location evidence="1">Cell inner membrane</location>
        <topology evidence="1">Single-pass membrane protein</topology>
    </subcellularLocation>
</comment>
<comment type="similarity">
    <text evidence="1">Belongs to the Cdh family.</text>
</comment>
<feature type="chain" id="PRO_1000115944" description="CDP-diacylglycerol pyrophosphatase">
    <location>
        <begin position="1"/>
        <end position="251"/>
    </location>
</feature>
<feature type="transmembrane region" description="Helical" evidence="1">
    <location>
        <begin position="5"/>
        <end position="25"/>
    </location>
</feature>
<dbReference type="EC" id="3.6.1.26" evidence="1"/>
<dbReference type="EMBL" id="AM933172">
    <property type="protein sequence ID" value="CAR35427.1"/>
    <property type="molecule type" value="Genomic_DNA"/>
</dbReference>
<dbReference type="RefSeq" id="WP_000750762.1">
    <property type="nucleotide sequence ID" value="NC_011294.1"/>
</dbReference>
<dbReference type="SMR" id="B5QWZ7"/>
<dbReference type="KEGG" id="set:SEN3854"/>
<dbReference type="HOGENOM" id="CLU_077117_0_1_6"/>
<dbReference type="UniPathway" id="UPA00609">
    <property type="reaction ID" value="UER00664"/>
</dbReference>
<dbReference type="Proteomes" id="UP000000613">
    <property type="component" value="Chromosome"/>
</dbReference>
<dbReference type="GO" id="GO:0005886">
    <property type="term" value="C:plasma membrane"/>
    <property type="evidence" value="ECO:0007669"/>
    <property type="project" value="UniProtKB-SubCell"/>
</dbReference>
<dbReference type="GO" id="GO:0008715">
    <property type="term" value="F:CDP-diacylglycerol diphosphatase activity"/>
    <property type="evidence" value="ECO:0007669"/>
    <property type="project" value="UniProtKB-UniRule"/>
</dbReference>
<dbReference type="GO" id="GO:0046342">
    <property type="term" value="P:CDP-diacylglycerol catabolic process"/>
    <property type="evidence" value="ECO:0007669"/>
    <property type="project" value="UniProtKB-UniRule"/>
</dbReference>
<dbReference type="GO" id="GO:0008654">
    <property type="term" value="P:phospholipid biosynthetic process"/>
    <property type="evidence" value="ECO:0007669"/>
    <property type="project" value="UniProtKB-KW"/>
</dbReference>
<dbReference type="Gene3D" id="3.30.428.30">
    <property type="entry name" value="HIT family - CDH-like"/>
    <property type="match status" value="1"/>
</dbReference>
<dbReference type="HAMAP" id="MF_00319">
    <property type="entry name" value="Cdh"/>
    <property type="match status" value="1"/>
</dbReference>
<dbReference type="InterPro" id="IPR003763">
    <property type="entry name" value="CDP-diacylglyc_Pase"/>
</dbReference>
<dbReference type="InterPro" id="IPR015993">
    <property type="entry name" value="CDP-diacylglyc_Pase_proteobac"/>
</dbReference>
<dbReference type="InterPro" id="IPR036265">
    <property type="entry name" value="HIT-like_sf"/>
</dbReference>
<dbReference type="NCBIfam" id="TIGR00672">
    <property type="entry name" value="cdh"/>
    <property type="match status" value="1"/>
</dbReference>
<dbReference type="NCBIfam" id="NF003986">
    <property type="entry name" value="PRK05471.1-5"/>
    <property type="match status" value="1"/>
</dbReference>
<dbReference type="NCBIfam" id="NF003987">
    <property type="entry name" value="PRK05471.1-6"/>
    <property type="match status" value="1"/>
</dbReference>
<dbReference type="Pfam" id="PF02611">
    <property type="entry name" value="CDH"/>
    <property type="match status" value="1"/>
</dbReference>
<dbReference type="PIRSF" id="PIRSF001273">
    <property type="entry name" value="CDH"/>
    <property type="match status" value="1"/>
</dbReference>
<dbReference type="SUPFAM" id="SSF54197">
    <property type="entry name" value="HIT-like"/>
    <property type="match status" value="1"/>
</dbReference>
<sequence>MKKTGYFLLAVIVIVAAAGVGYWKFSGNPDALREIVLEQCLPDQLQHQNPAPCAEVKPRAGYVVFKDRHGPLQYLLMPTYRINGTESPLLLEPATPNFFWLAWQARGYMSKKYGHDIPDSAVSLAINSRLGRSQDHLHIHISCIRPDVREQLDNDLTRISTRWLPLPGGLMGHEYLARRVTESELAQRSPFMMLAEEVPEARDHMGRYALAVVRQSDDSFVLLATERNLLTLNRASAEEIQDHSCAILSSR</sequence>
<organism>
    <name type="scientific">Salmonella enteritidis PT4 (strain P125109)</name>
    <dbReference type="NCBI Taxonomy" id="550537"/>
    <lineage>
        <taxon>Bacteria</taxon>
        <taxon>Pseudomonadati</taxon>
        <taxon>Pseudomonadota</taxon>
        <taxon>Gammaproteobacteria</taxon>
        <taxon>Enterobacterales</taxon>
        <taxon>Enterobacteriaceae</taxon>
        <taxon>Salmonella</taxon>
    </lineage>
</organism>